<sequence>MRKRYAALAIVLALILSLALPELLFQLYPSSAVLNVDKLLNPPPENPNPFAAEPPANKYLDSVWAESHRNSYCQASSPFEAPRFPEKLRFEYLTLRDLPITIAFSEPYEDGKRVAWVSTVGFTGKIAKIDLENFSLIDEITPEGHRMGISGAYSVLANRTFFVPKLNRIYAYGDNGRLSRIELKGVFELPEVCSGEEIVGITLTYDGMIAFATNFGRVGVVSPNFGDYALYPINQNCEIAETISNSIAADESGGIYVVTDKAVYRINWDGKSLRLGWRAEYQTGEQRGGRLGKGSGSTPSLMNCGEDRFVVITDGQRLMHMVLFWRDEIPEDWKGIEGRDRRIAAEVPVTFGFEKDESYSEQSVLVRNCSAAITNNRLGLRLLDLLPERLQPFSMLLSNVPGIAPYGVEKFEWDAEKRALRSVWASNVSIPNAIPTMSDKTNLLYAIGQRGGFWTLEAVNWESGEAVWYARISPLPAHNSFYAATEIGPDGCIYTGMLWGVARLCNAD</sequence>
<comment type="subcellular location">
    <subcellularLocation>
        <location evidence="2">Membrane</location>
        <topology evidence="2">Single-pass membrane protein</topology>
    </subcellularLocation>
</comment>
<protein>
    <recommendedName>
        <fullName>Uncharacterized protein AF_2205</fullName>
    </recommendedName>
</protein>
<proteinExistence type="predicted"/>
<accession>O28078</accession>
<reference key="1">
    <citation type="journal article" date="1997" name="Nature">
        <title>The complete genome sequence of the hyperthermophilic, sulphate-reducing archaeon Archaeoglobus fulgidus.</title>
        <authorList>
            <person name="Klenk H.-P."/>
            <person name="Clayton R.A."/>
            <person name="Tomb J.-F."/>
            <person name="White O."/>
            <person name="Nelson K.E."/>
            <person name="Ketchum K.A."/>
            <person name="Dodson R.J."/>
            <person name="Gwinn M.L."/>
            <person name="Hickey E.K."/>
            <person name="Peterson J.D."/>
            <person name="Richardson D.L."/>
            <person name="Kerlavage A.R."/>
            <person name="Graham D.E."/>
            <person name="Kyrpides N.C."/>
            <person name="Fleischmann R.D."/>
            <person name="Quackenbush J."/>
            <person name="Lee N.H."/>
            <person name="Sutton G.G."/>
            <person name="Gill S.R."/>
            <person name="Kirkness E.F."/>
            <person name="Dougherty B.A."/>
            <person name="McKenney K."/>
            <person name="Adams M.D."/>
            <person name="Loftus B.J."/>
            <person name="Peterson S.N."/>
            <person name="Reich C.I."/>
            <person name="McNeil L.K."/>
            <person name="Badger J.H."/>
            <person name="Glodek A."/>
            <person name="Zhou L."/>
            <person name="Overbeek R."/>
            <person name="Gocayne J.D."/>
            <person name="Weidman J.F."/>
            <person name="McDonald L.A."/>
            <person name="Utterback T.R."/>
            <person name="Cotton M.D."/>
            <person name="Spriggs T."/>
            <person name="Artiach P."/>
            <person name="Kaine B.P."/>
            <person name="Sykes S.M."/>
            <person name="Sadow P.W."/>
            <person name="D'Andrea K.P."/>
            <person name="Bowman C."/>
            <person name="Fujii C."/>
            <person name="Garland S.A."/>
            <person name="Mason T.M."/>
            <person name="Olsen G.J."/>
            <person name="Fraser C.M."/>
            <person name="Smith H.O."/>
            <person name="Woese C.R."/>
            <person name="Venter J.C."/>
        </authorList>
    </citation>
    <scope>NUCLEOTIDE SEQUENCE [LARGE SCALE GENOMIC DNA]</scope>
    <source>
        <strain>ATCC 49558 / DSM 4304 / JCM 9628 / NBRC 100126 / VC-16</strain>
    </source>
</reference>
<feature type="chain" id="PRO_0000128120" description="Uncharacterized protein AF_2205">
    <location>
        <begin position="1"/>
        <end position="508"/>
    </location>
</feature>
<feature type="transmembrane region" description="Helical" evidence="1">
    <location>
        <begin position="7"/>
        <end position="29"/>
    </location>
</feature>
<organism>
    <name type="scientific">Archaeoglobus fulgidus (strain ATCC 49558 / DSM 4304 / JCM 9628 / NBRC 100126 / VC-16)</name>
    <dbReference type="NCBI Taxonomy" id="224325"/>
    <lineage>
        <taxon>Archaea</taxon>
        <taxon>Methanobacteriati</taxon>
        <taxon>Methanobacteriota</taxon>
        <taxon>Archaeoglobi</taxon>
        <taxon>Archaeoglobales</taxon>
        <taxon>Archaeoglobaceae</taxon>
        <taxon>Archaeoglobus</taxon>
    </lineage>
</organism>
<evidence type="ECO:0000255" key="1"/>
<evidence type="ECO:0000305" key="2"/>
<dbReference type="EMBL" id="AE000782">
    <property type="protein sequence ID" value="AAB89056.1"/>
    <property type="molecule type" value="Genomic_DNA"/>
</dbReference>
<dbReference type="PIR" id="E69525">
    <property type="entry name" value="E69525"/>
</dbReference>
<dbReference type="RefSeq" id="WP_010879694.1">
    <property type="nucleotide sequence ID" value="NC_000917.1"/>
</dbReference>
<dbReference type="STRING" id="224325.AF_2205"/>
<dbReference type="PaxDb" id="224325-AF_2205"/>
<dbReference type="EnsemblBacteria" id="AAB89056">
    <property type="protein sequence ID" value="AAB89056"/>
    <property type="gene ID" value="AF_2205"/>
</dbReference>
<dbReference type="GeneID" id="1485434"/>
<dbReference type="KEGG" id="afu:AF_2205"/>
<dbReference type="HOGENOM" id="CLU_022794_0_0_2"/>
<dbReference type="OrthoDB" id="60650at2157"/>
<dbReference type="Proteomes" id="UP000002199">
    <property type="component" value="Chromosome"/>
</dbReference>
<dbReference type="GO" id="GO:0016020">
    <property type="term" value="C:membrane"/>
    <property type="evidence" value="ECO:0007669"/>
    <property type="project" value="UniProtKB-SubCell"/>
</dbReference>
<dbReference type="SUPFAM" id="SSF82171">
    <property type="entry name" value="DPP6 N-terminal domain-like"/>
    <property type="match status" value="1"/>
</dbReference>
<keyword id="KW-0472">Membrane</keyword>
<keyword id="KW-1185">Reference proteome</keyword>
<keyword id="KW-0812">Transmembrane</keyword>
<keyword id="KW-1133">Transmembrane helix</keyword>
<name>Y2205_ARCFU</name>
<gene>
    <name type="ordered locus">AF_2205</name>
</gene>